<name>MASZ_MYCLB</name>
<feature type="chain" id="PRO_1000147426" description="Malate synthase G">
    <location>
        <begin position="1"/>
        <end position="731"/>
    </location>
</feature>
<feature type="active site" description="Proton acceptor" evidence="1">
    <location>
        <position position="340"/>
    </location>
</feature>
<feature type="active site" description="Proton donor" evidence="1">
    <location>
        <position position="638"/>
    </location>
</feature>
<feature type="binding site" evidence="1">
    <location>
        <position position="118"/>
    </location>
    <ligand>
        <name>acetyl-CoA</name>
        <dbReference type="ChEBI" id="CHEBI:57288"/>
    </ligand>
</feature>
<feature type="binding site" evidence="1">
    <location>
        <begin position="125"/>
        <end position="126"/>
    </location>
    <ligand>
        <name>acetyl-CoA</name>
        <dbReference type="ChEBI" id="CHEBI:57288"/>
    </ligand>
</feature>
<feature type="binding site" evidence="1">
    <location>
        <position position="276"/>
    </location>
    <ligand>
        <name>acetyl-CoA</name>
        <dbReference type="ChEBI" id="CHEBI:57288"/>
    </ligand>
</feature>
<feature type="binding site" evidence="1">
    <location>
        <position position="313"/>
    </location>
    <ligand>
        <name>acetyl-CoA</name>
        <dbReference type="ChEBI" id="CHEBI:57288"/>
    </ligand>
</feature>
<feature type="binding site" evidence="1">
    <location>
        <position position="340"/>
    </location>
    <ligand>
        <name>glyoxylate</name>
        <dbReference type="ChEBI" id="CHEBI:36655"/>
    </ligand>
</feature>
<feature type="binding site" evidence="1">
    <location>
        <position position="439"/>
    </location>
    <ligand>
        <name>glyoxylate</name>
        <dbReference type="ChEBI" id="CHEBI:36655"/>
    </ligand>
</feature>
<feature type="binding site">
    <location>
        <position position="439"/>
    </location>
    <ligand>
        <name>Mg(2+)</name>
        <dbReference type="ChEBI" id="CHEBI:18420"/>
    </ligand>
</feature>
<feature type="binding site" evidence="1">
    <location>
        <begin position="464"/>
        <end position="467"/>
    </location>
    <ligand>
        <name>glyoxylate</name>
        <dbReference type="ChEBI" id="CHEBI:36655"/>
    </ligand>
</feature>
<feature type="binding site">
    <location>
        <position position="467"/>
    </location>
    <ligand>
        <name>Mg(2+)</name>
        <dbReference type="ChEBI" id="CHEBI:18420"/>
    </ligand>
</feature>
<feature type="binding site" evidence="1">
    <location>
        <position position="548"/>
    </location>
    <ligand>
        <name>acetyl-CoA</name>
        <dbReference type="ChEBI" id="CHEBI:57288"/>
    </ligand>
</feature>
<feature type="modified residue" description="Cysteine sulfenic acid (-SOH)" evidence="1">
    <location>
        <position position="624"/>
    </location>
</feature>
<feature type="strand" evidence="3">
    <location>
        <begin position="4"/>
        <end position="7"/>
    </location>
</feature>
<feature type="strand" evidence="3">
    <location>
        <begin position="10"/>
        <end position="13"/>
    </location>
</feature>
<feature type="helix" evidence="3">
    <location>
        <begin position="14"/>
        <end position="23"/>
    </location>
</feature>
<feature type="helix" evidence="3">
    <location>
        <begin position="32"/>
        <end position="70"/>
    </location>
</feature>
<feature type="helix" evidence="3">
    <location>
        <begin position="78"/>
        <end position="87"/>
    </location>
</feature>
<feature type="helix" evidence="3">
    <location>
        <begin position="107"/>
        <end position="110"/>
    </location>
</feature>
<feature type="strand" evidence="3">
    <location>
        <begin position="116"/>
        <end position="120"/>
    </location>
</feature>
<feature type="helix" evidence="3">
    <location>
        <begin position="124"/>
        <end position="132"/>
    </location>
</feature>
<feature type="strand" evidence="3">
    <location>
        <begin position="135"/>
        <end position="137"/>
    </location>
</feature>
<feature type="helix" evidence="3">
    <location>
        <begin position="138"/>
        <end position="143"/>
    </location>
</feature>
<feature type="helix" evidence="3">
    <location>
        <begin position="162"/>
        <end position="179"/>
    </location>
</feature>
<feature type="helix" evidence="3">
    <location>
        <begin position="187"/>
        <end position="189"/>
    </location>
</feature>
<feature type="strand" evidence="3">
    <location>
        <begin position="207"/>
        <end position="209"/>
    </location>
</feature>
<feature type="helix" evidence="3">
    <location>
        <begin position="214"/>
        <end position="216"/>
    </location>
</feature>
<feature type="strand" evidence="3">
    <location>
        <begin position="217"/>
        <end position="220"/>
    </location>
</feature>
<feature type="strand" evidence="3">
    <location>
        <begin position="232"/>
        <end position="235"/>
    </location>
</feature>
<feature type="strand" evidence="3">
    <location>
        <begin position="238"/>
        <end position="243"/>
    </location>
</feature>
<feature type="helix" evidence="3">
    <location>
        <begin position="251"/>
        <end position="253"/>
    </location>
</feature>
<feature type="strand" evidence="3">
    <location>
        <begin position="260"/>
        <end position="264"/>
    </location>
</feature>
<feature type="strand" evidence="3">
    <location>
        <begin position="267"/>
        <end position="274"/>
    </location>
</feature>
<feature type="helix" evidence="3">
    <location>
        <begin position="282"/>
        <end position="297"/>
    </location>
</feature>
<feature type="strand" evidence="3">
    <location>
        <begin position="302"/>
        <end position="306"/>
    </location>
</feature>
<feature type="strand" evidence="3">
    <location>
        <begin position="309"/>
        <end position="313"/>
    </location>
</feature>
<feature type="strand" evidence="3">
    <location>
        <begin position="319"/>
        <end position="322"/>
    </location>
</feature>
<feature type="strand" evidence="3">
    <location>
        <begin position="328"/>
        <end position="331"/>
    </location>
</feature>
<feature type="strand" evidence="3">
    <location>
        <begin position="336"/>
        <end position="340"/>
    </location>
</feature>
<feature type="strand" evidence="3">
    <location>
        <begin position="347"/>
        <end position="353"/>
    </location>
</feature>
<feature type="strand" evidence="3">
    <location>
        <begin position="359"/>
        <end position="364"/>
    </location>
</feature>
<feature type="helix" evidence="3">
    <location>
        <begin position="365"/>
        <end position="377"/>
    </location>
</feature>
<feature type="helix" evidence="3">
    <location>
        <begin position="378"/>
        <end position="380"/>
    </location>
</feature>
<feature type="helix" evidence="3">
    <location>
        <begin position="385"/>
        <end position="387"/>
    </location>
</feature>
<feature type="strand" evidence="3">
    <location>
        <begin position="394"/>
        <end position="396"/>
    </location>
</feature>
<feature type="strand" evidence="3">
    <location>
        <begin position="398"/>
        <end position="402"/>
    </location>
</feature>
<feature type="helix" evidence="3">
    <location>
        <begin position="408"/>
        <end position="425"/>
    </location>
</feature>
<feature type="strand" evidence="3">
    <location>
        <begin position="432"/>
        <end position="438"/>
    </location>
</feature>
<feature type="helix" evidence="3">
    <location>
        <begin position="441"/>
        <end position="444"/>
    </location>
</feature>
<feature type="helix" evidence="3">
    <location>
        <begin position="447"/>
        <end position="453"/>
    </location>
</feature>
<feature type="turn" evidence="3">
    <location>
        <begin position="454"/>
        <end position="457"/>
    </location>
</feature>
<feature type="strand" evidence="3">
    <location>
        <begin position="458"/>
        <end position="463"/>
    </location>
</feature>
<feature type="helix" evidence="3">
    <location>
        <begin position="465"/>
        <end position="475"/>
    </location>
</feature>
<feature type="helix" evidence="3">
    <location>
        <begin position="477"/>
        <end position="479"/>
    </location>
</feature>
<feature type="turn" evidence="3">
    <location>
        <begin position="485"/>
        <end position="487"/>
    </location>
</feature>
<feature type="helix" evidence="3">
    <location>
        <begin position="488"/>
        <end position="490"/>
    </location>
</feature>
<feature type="helix" evidence="3">
    <location>
        <begin position="492"/>
        <end position="507"/>
    </location>
</feature>
<feature type="turn" evidence="3">
    <location>
        <begin position="511"/>
        <end position="513"/>
    </location>
</feature>
<feature type="strand" evidence="3">
    <location>
        <begin position="514"/>
        <end position="518"/>
    </location>
</feature>
<feature type="strand" evidence="3">
    <location>
        <begin position="523"/>
        <end position="525"/>
    </location>
</feature>
<feature type="helix" evidence="3">
    <location>
        <begin position="527"/>
        <end position="533"/>
    </location>
</feature>
<feature type="helix" evidence="3">
    <location>
        <begin position="536"/>
        <end position="539"/>
    </location>
</feature>
<feature type="strand" evidence="3">
    <location>
        <begin position="543"/>
        <end position="549"/>
    </location>
</feature>
<feature type="helix" evidence="3">
    <location>
        <begin position="550"/>
        <end position="562"/>
    </location>
</feature>
<feature type="helix" evidence="3">
    <location>
        <begin position="565"/>
        <end position="572"/>
    </location>
</feature>
<feature type="helix" evidence="3">
    <location>
        <begin position="580"/>
        <end position="583"/>
    </location>
</feature>
<feature type="helix" evidence="3">
    <location>
        <begin position="596"/>
        <end position="620"/>
    </location>
</feature>
<feature type="strand" evidence="3">
    <location>
        <begin position="625"/>
        <end position="628"/>
    </location>
</feature>
<feature type="strand" evidence="3">
    <location>
        <begin position="634"/>
        <end position="637"/>
    </location>
</feature>
<feature type="helix" evidence="3">
    <location>
        <begin position="639"/>
        <end position="654"/>
    </location>
</feature>
<feature type="helix" evidence="3">
    <location>
        <begin position="660"/>
        <end position="677"/>
    </location>
</feature>
<feature type="turn" evidence="3">
    <location>
        <begin position="678"/>
        <end position="680"/>
    </location>
</feature>
<feature type="helix" evidence="3">
    <location>
        <begin position="691"/>
        <end position="693"/>
    </location>
</feature>
<feature type="helix" evidence="3">
    <location>
        <begin position="695"/>
        <end position="705"/>
    </location>
</feature>
<feature type="helix" evidence="3">
    <location>
        <begin position="707"/>
        <end position="709"/>
    </location>
</feature>
<feature type="helix" evidence="3">
    <location>
        <begin position="711"/>
        <end position="713"/>
    </location>
</feature>
<feature type="helix" evidence="3">
    <location>
        <begin position="716"/>
        <end position="728"/>
    </location>
</feature>
<evidence type="ECO:0000255" key="1">
    <source>
        <dbReference type="HAMAP-Rule" id="MF_00641"/>
    </source>
</evidence>
<evidence type="ECO:0000269" key="2">
    <source ref="2"/>
</evidence>
<evidence type="ECO:0007829" key="3">
    <source>
        <dbReference type="PDB" id="4EX4"/>
    </source>
</evidence>
<reference key="1">
    <citation type="journal article" date="2009" name="Nat. Genet.">
        <title>Comparative genomic and phylogeographic analysis of Mycobacterium leprae.</title>
        <authorList>
            <person name="Monot M."/>
            <person name="Honore N."/>
            <person name="Garnier T."/>
            <person name="Zidane N."/>
            <person name="Sherafi D."/>
            <person name="Paniz-Mondolfi A."/>
            <person name="Matsuoka M."/>
            <person name="Taylor G.M."/>
            <person name="Donoghue H.D."/>
            <person name="Bouwman A."/>
            <person name="Mays S."/>
            <person name="Watson C."/>
            <person name="Lockwood D."/>
            <person name="Khamispour A."/>
            <person name="Dowlati Y."/>
            <person name="Jianping S."/>
            <person name="Rea T.H."/>
            <person name="Vera-Cabrera L."/>
            <person name="Stefani M.M."/>
            <person name="Banu S."/>
            <person name="Macdonald M."/>
            <person name="Sapkota B.R."/>
            <person name="Spencer J.S."/>
            <person name="Thomas J."/>
            <person name="Harshman K."/>
            <person name="Singh P."/>
            <person name="Busso P."/>
            <person name="Gattiker A."/>
            <person name="Rougemont J."/>
            <person name="Brennan P.J."/>
            <person name="Cole S.T."/>
        </authorList>
    </citation>
    <scope>NUCLEOTIDE SEQUENCE [LARGE SCALE GENOMIC DNA]</scope>
    <source>
        <strain>Br4923</strain>
    </source>
</reference>
<reference key="2">
    <citation type="submission" date="2012-04" db="PDB data bank">
        <title>The structure of glcb from mycobacterium leprae.</title>
        <authorList>
            <consortium name="Seattle structural genomics center for infectious disease (SSGCID)"/>
        </authorList>
    </citation>
    <scope>X-RAY CRYSTALLOGRAPHY (1.65 ANGSTROMS) IN COMPLEX WITH MAGNESIUM ION</scope>
    <scope>SUBUNIT</scope>
</reference>
<sequence length="731" mass="80143">MTDRVSAGNLRVARVLYDFVNNEALPGTDINPNSFWSGVAKVVADLTPQNQSLLNSRDELQAQIDKWHRHRVIEPFDVDAYRQFLIDIGYLLPEPDDFTISTSGVDDEITMTAGPQLVVPVLNARFALNAANARWGSLYDALYGTDTIPETEGAEKGSEYNKIRGDKVIAYARKFMDQAVPLASDSWTNATGVSIFDGQLQIAIGTNSTGLASPEKFVGYNRQLRSSNWSVLLANHGLHIEVLIDPESPIGKTDPVGIKDVILESAITTIMDFEDSVTAVDADDKVRGYRNWLGLNKGDLTEEVNKDGKTFTRVLNADRSYTTPDGGELTLPGRSLLFVRNVGHLTTSDAILVDGGDGQEKEVFEGIIDAVFTGLAAIHGLKTGEANGPLTNSRTGSIYIVKPKMHGPAEVAFTCELFSRVEDVLGLPQGTLKVGIMDEERRTTLNLKACIKAAADRVVFINTGFLDRTGDEIHTSMEAGPMIRKGAMKNSTWIKAYEDANVDIGLAAGFKGKAQIGKGMWAMTELMADMVEQKIGQPKAGATTAWVPSPTAATLHAMHYHQVDVAAVQQELTGQRRATVDQLLTIPLAKELAWAPEEIREEVDNDCQSILGYVVRWVDQGIGCSKVPDIHNVALMEDRATLRISSQLLANWLRHGVITSEDVRASLERMAPLVDQQNAEDPAYRPMAPNFDDSIAFLAAQELILSGAQQPNGYTEPILHRRRREFKAQNR</sequence>
<keyword id="KW-0002">3D-structure</keyword>
<keyword id="KW-0963">Cytoplasm</keyword>
<keyword id="KW-0329">Glyoxylate bypass</keyword>
<keyword id="KW-0460">Magnesium</keyword>
<keyword id="KW-0479">Metal-binding</keyword>
<keyword id="KW-0558">Oxidation</keyword>
<keyword id="KW-0808">Transferase</keyword>
<keyword id="KW-0816">Tricarboxylic acid cycle</keyword>
<comment type="function">
    <text evidence="1">Involved in the glycolate utilization. Catalyzes the condensation and subsequent hydrolysis of acetyl-coenzyme A (acetyl-CoA) and glyoxylate to form malate and CoA.</text>
</comment>
<comment type="catalytic activity">
    <reaction evidence="1">
        <text>glyoxylate + acetyl-CoA + H2O = (S)-malate + CoA + H(+)</text>
        <dbReference type="Rhea" id="RHEA:18181"/>
        <dbReference type="ChEBI" id="CHEBI:15377"/>
        <dbReference type="ChEBI" id="CHEBI:15378"/>
        <dbReference type="ChEBI" id="CHEBI:15589"/>
        <dbReference type="ChEBI" id="CHEBI:36655"/>
        <dbReference type="ChEBI" id="CHEBI:57287"/>
        <dbReference type="ChEBI" id="CHEBI:57288"/>
        <dbReference type="EC" id="2.3.3.9"/>
    </reaction>
</comment>
<comment type="cofactor">
    <cofactor>
        <name>Mg(2+)</name>
        <dbReference type="ChEBI" id="CHEBI:18420"/>
    </cofactor>
</comment>
<comment type="pathway">
    <text evidence="1">Carbohydrate metabolism; glyoxylate cycle; (S)-malate from isocitrate: step 2/2.</text>
</comment>
<comment type="subunit">
    <text evidence="2">Homodimer.</text>
</comment>
<comment type="subcellular location">
    <subcellularLocation>
        <location evidence="1">Cytoplasm</location>
    </subcellularLocation>
</comment>
<comment type="similarity">
    <text evidence="1">Belongs to the malate synthase family. GlcB subfamily.</text>
</comment>
<proteinExistence type="evidence at protein level"/>
<organism>
    <name type="scientific">Mycobacterium leprae (strain Br4923)</name>
    <dbReference type="NCBI Taxonomy" id="561304"/>
    <lineage>
        <taxon>Bacteria</taxon>
        <taxon>Bacillati</taxon>
        <taxon>Actinomycetota</taxon>
        <taxon>Actinomycetes</taxon>
        <taxon>Mycobacteriales</taxon>
        <taxon>Mycobacteriaceae</taxon>
        <taxon>Mycobacterium</taxon>
    </lineage>
</organism>
<accession>B8ZSN3</accession>
<dbReference type="EC" id="2.3.3.9" evidence="1"/>
<dbReference type="EMBL" id="FM211192">
    <property type="protein sequence ID" value="CAR72166.1"/>
    <property type="molecule type" value="Genomic_DNA"/>
</dbReference>
<dbReference type="PDB" id="4EX4">
    <property type="method" value="X-ray"/>
    <property type="resolution" value="2.10 A"/>
    <property type="chains" value="A/B=1-731"/>
</dbReference>
<dbReference type="PDBsum" id="4EX4"/>
<dbReference type="SMR" id="B8ZSN3"/>
<dbReference type="KEGG" id="mlb:MLBr02069"/>
<dbReference type="HOGENOM" id="CLU_028446_1_0_11"/>
<dbReference type="UniPathway" id="UPA00703">
    <property type="reaction ID" value="UER00720"/>
</dbReference>
<dbReference type="EvolutionaryTrace" id="B8ZSN3"/>
<dbReference type="Proteomes" id="UP000006900">
    <property type="component" value="Chromosome"/>
</dbReference>
<dbReference type="GO" id="GO:0005829">
    <property type="term" value="C:cytosol"/>
    <property type="evidence" value="ECO:0007669"/>
    <property type="project" value="TreeGrafter"/>
</dbReference>
<dbReference type="GO" id="GO:0000287">
    <property type="term" value="F:magnesium ion binding"/>
    <property type="evidence" value="ECO:0007669"/>
    <property type="project" value="TreeGrafter"/>
</dbReference>
<dbReference type="GO" id="GO:0004474">
    <property type="term" value="F:malate synthase activity"/>
    <property type="evidence" value="ECO:0007669"/>
    <property type="project" value="UniProtKB-UniRule"/>
</dbReference>
<dbReference type="GO" id="GO:0009436">
    <property type="term" value="P:glyoxylate catabolic process"/>
    <property type="evidence" value="ECO:0007669"/>
    <property type="project" value="TreeGrafter"/>
</dbReference>
<dbReference type="GO" id="GO:0006097">
    <property type="term" value="P:glyoxylate cycle"/>
    <property type="evidence" value="ECO:0007669"/>
    <property type="project" value="UniProtKB-UniRule"/>
</dbReference>
<dbReference type="GO" id="GO:0006099">
    <property type="term" value="P:tricarboxylic acid cycle"/>
    <property type="evidence" value="ECO:0007669"/>
    <property type="project" value="UniProtKB-KW"/>
</dbReference>
<dbReference type="CDD" id="cd00728">
    <property type="entry name" value="malate_synt_G"/>
    <property type="match status" value="1"/>
</dbReference>
<dbReference type="FunFam" id="3.20.20.360:FF:000002">
    <property type="entry name" value="Malate synthase G"/>
    <property type="match status" value="1"/>
</dbReference>
<dbReference type="Gene3D" id="3.20.20.360">
    <property type="entry name" value="Malate synthase, domain 3"/>
    <property type="match status" value="2"/>
</dbReference>
<dbReference type="Gene3D" id="1.20.1220.12">
    <property type="entry name" value="Malate synthase, domain III"/>
    <property type="match status" value="1"/>
</dbReference>
<dbReference type="HAMAP" id="MF_00641">
    <property type="entry name" value="Malate_synth_G"/>
    <property type="match status" value="1"/>
</dbReference>
<dbReference type="InterPro" id="IPR044856">
    <property type="entry name" value="Malate_synth_C_sf"/>
</dbReference>
<dbReference type="InterPro" id="IPR011076">
    <property type="entry name" value="Malate_synth_sf"/>
</dbReference>
<dbReference type="InterPro" id="IPR001465">
    <property type="entry name" value="Malate_synthase_TIM"/>
</dbReference>
<dbReference type="InterPro" id="IPR006253">
    <property type="entry name" value="Malate_synthG"/>
</dbReference>
<dbReference type="InterPro" id="IPR048355">
    <property type="entry name" value="MS_C"/>
</dbReference>
<dbReference type="InterPro" id="IPR048356">
    <property type="entry name" value="MS_N"/>
</dbReference>
<dbReference type="InterPro" id="IPR046363">
    <property type="entry name" value="MS_N_TIM-barrel_dom"/>
</dbReference>
<dbReference type="InterPro" id="IPR048357">
    <property type="entry name" value="MSG_insertion"/>
</dbReference>
<dbReference type="NCBIfam" id="TIGR01345">
    <property type="entry name" value="malate_syn_G"/>
    <property type="match status" value="1"/>
</dbReference>
<dbReference type="NCBIfam" id="NF002825">
    <property type="entry name" value="PRK02999.1"/>
    <property type="match status" value="1"/>
</dbReference>
<dbReference type="PANTHER" id="PTHR42739">
    <property type="entry name" value="MALATE SYNTHASE G"/>
    <property type="match status" value="1"/>
</dbReference>
<dbReference type="PANTHER" id="PTHR42739:SF1">
    <property type="entry name" value="MALATE SYNTHASE G"/>
    <property type="match status" value="1"/>
</dbReference>
<dbReference type="Pfam" id="PF20659">
    <property type="entry name" value="MS_C"/>
    <property type="match status" value="1"/>
</dbReference>
<dbReference type="Pfam" id="PF20656">
    <property type="entry name" value="MS_N"/>
    <property type="match status" value="1"/>
</dbReference>
<dbReference type="Pfam" id="PF01274">
    <property type="entry name" value="MS_TIM-barrel"/>
    <property type="match status" value="1"/>
</dbReference>
<dbReference type="Pfam" id="PF20658">
    <property type="entry name" value="MSG_insertion"/>
    <property type="match status" value="1"/>
</dbReference>
<dbReference type="SUPFAM" id="SSF51645">
    <property type="entry name" value="Malate synthase G"/>
    <property type="match status" value="1"/>
</dbReference>
<gene>
    <name evidence="1" type="primary">glcB</name>
    <name type="ordered locus">MLBr02069</name>
</gene>
<protein>
    <recommendedName>
        <fullName evidence="1">Malate synthase G</fullName>
        <ecNumber evidence="1">2.3.3.9</ecNumber>
    </recommendedName>
</protein>